<dbReference type="EC" id="2.7.4.9" evidence="1"/>
<dbReference type="EMBL" id="CP001033">
    <property type="protein sequence ID" value="ACB90161.1"/>
    <property type="molecule type" value="Genomic_DNA"/>
</dbReference>
<dbReference type="RefSeq" id="WP_000033390.1">
    <property type="nucleotide sequence ID" value="NC_010582.1"/>
</dbReference>
<dbReference type="SMR" id="B2IP90"/>
<dbReference type="KEGG" id="spw:SPCG_0909"/>
<dbReference type="HOGENOM" id="CLU_049131_0_2_9"/>
<dbReference type="GO" id="GO:0005829">
    <property type="term" value="C:cytosol"/>
    <property type="evidence" value="ECO:0007669"/>
    <property type="project" value="TreeGrafter"/>
</dbReference>
<dbReference type="GO" id="GO:0005524">
    <property type="term" value="F:ATP binding"/>
    <property type="evidence" value="ECO:0007669"/>
    <property type="project" value="UniProtKB-UniRule"/>
</dbReference>
<dbReference type="GO" id="GO:0004798">
    <property type="term" value="F:dTMP kinase activity"/>
    <property type="evidence" value="ECO:0007669"/>
    <property type="project" value="UniProtKB-UniRule"/>
</dbReference>
<dbReference type="GO" id="GO:0006233">
    <property type="term" value="P:dTDP biosynthetic process"/>
    <property type="evidence" value="ECO:0007669"/>
    <property type="project" value="InterPro"/>
</dbReference>
<dbReference type="GO" id="GO:0006235">
    <property type="term" value="P:dTTP biosynthetic process"/>
    <property type="evidence" value="ECO:0007669"/>
    <property type="project" value="UniProtKB-UniRule"/>
</dbReference>
<dbReference type="GO" id="GO:0006227">
    <property type="term" value="P:dUDP biosynthetic process"/>
    <property type="evidence" value="ECO:0007669"/>
    <property type="project" value="TreeGrafter"/>
</dbReference>
<dbReference type="CDD" id="cd01672">
    <property type="entry name" value="TMPK"/>
    <property type="match status" value="1"/>
</dbReference>
<dbReference type="FunFam" id="3.40.50.300:FF:000225">
    <property type="entry name" value="Thymidylate kinase"/>
    <property type="match status" value="1"/>
</dbReference>
<dbReference type="Gene3D" id="3.40.50.300">
    <property type="entry name" value="P-loop containing nucleotide triphosphate hydrolases"/>
    <property type="match status" value="1"/>
</dbReference>
<dbReference type="HAMAP" id="MF_00165">
    <property type="entry name" value="Thymidylate_kinase"/>
    <property type="match status" value="1"/>
</dbReference>
<dbReference type="InterPro" id="IPR027417">
    <property type="entry name" value="P-loop_NTPase"/>
</dbReference>
<dbReference type="InterPro" id="IPR039430">
    <property type="entry name" value="Thymidylate_kin-like_dom"/>
</dbReference>
<dbReference type="InterPro" id="IPR018095">
    <property type="entry name" value="Thymidylate_kin_CS"/>
</dbReference>
<dbReference type="InterPro" id="IPR018094">
    <property type="entry name" value="Thymidylate_kinase"/>
</dbReference>
<dbReference type="NCBIfam" id="TIGR00041">
    <property type="entry name" value="DTMP_kinase"/>
    <property type="match status" value="1"/>
</dbReference>
<dbReference type="PANTHER" id="PTHR10344">
    <property type="entry name" value="THYMIDYLATE KINASE"/>
    <property type="match status" value="1"/>
</dbReference>
<dbReference type="PANTHER" id="PTHR10344:SF4">
    <property type="entry name" value="UMP-CMP KINASE 2, MITOCHONDRIAL"/>
    <property type="match status" value="1"/>
</dbReference>
<dbReference type="Pfam" id="PF02223">
    <property type="entry name" value="Thymidylate_kin"/>
    <property type="match status" value="1"/>
</dbReference>
<dbReference type="SUPFAM" id="SSF52540">
    <property type="entry name" value="P-loop containing nucleoside triphosphate hydrolases"/>
    <property type="match status" value="1"/>
</dbReference>
<dbReference type="PROSITE" id="PS01331">
    <property type="entry name" value="THYMIDYLATE_KINASE"/>
    <property type="match status" value="1"/>
</dbReference>
<sequence length="212" mass="23438">MSKGFLVSLEGPEGAGKTSVLEALLPILEEKGVKVLTTREPGGVLIGEKIREVILDPSHTQMDAKTELLLYIASRRQHLVEKVLPALEAGKLVIMDRFIDSSVAYQGFGRGLDIEAIDWLNQFATDGLKPDLTLYFDIEVEEGLARIAANSDREVNRLDLEGLELHKKVRQGYLSLLEKEGNRIVKIDASLPLEQVVETTKAVLFDGMDLAK</sequence>
<reference key="1">
    <citation type="journal article" date="2009" name="BMC Genomics">
        <title>Genome evolution driven by host adaptations results in a more virulent and antimicrobial-resistant Streptococcus pneumoniae serotype 14.</title>
        <authorList>
            <person name="Ding F."/>
            <person name="Tang P."/>
            <person name="Hsu M.-H."/>
            <person name="Cui P."/>
            <person name="Hu S."/>
            <person name="Yu J."/>
            <person name="Chiu C.-H."/>
        </authorList>
    </citation>
    <scope>NUCLEOTIDE SEQUENCE [LARGE SCALE GENOMIC DNA]</scope>
    <source>
        <strain>CGSP14</strain>
    </source>
</reference>
<name>KTHY_STRPS</name>
<organism>
    <name type="scientific">Streptococcus pneumoniae (strain CGSP14)</name>
    <dbReference type="NCBI Taxonomy" id="516950"/>
    <lineage>
        <taxon>Bacteria</taxon>
        <taxon>Bacillati</taxon>
        <taxon>Bacillota</taxon>
        <taxon>Bacilli</taxon>
        <taxon>Lactobacillales</taxon>
        <taxon>Streptococcaceae</taxon>
        <taxon>Streptococcus</taxon>
    </lineage>
</organism>
<feature type="chain" id="PRO_1000097433" description="Thymidylate kinase">
    <location>
        <begin position="1"/>
        <end position="212"/>
    </location>
</feature>
<feature type="binding site" evidence="1">
    <location>
        <begin position="11"/>
        <end position="18"/>
    </location>
    <ligand>
        <name>ATP</name>
        <dbReference type="ChEBI" id="CHEBI:30616"/>
    </ligand>
</feature>
<comment type="function">
    <text evidence="1">Phosphorylation of dTMP to form dTDP in both de novo and salvage pathways of dTTP synthesis.</text>
</comment>
<comment type="catalytic activity">
    <reaction evidence="1">
        <text>dTMP + ATP = dTDP + ADP</text>
        <dbReference type="Rhea" id="RHEA:13517"/>
        <dbReference type="ChEBI" id="CHEBI:30616"/>
        <dbReference type="ChEBI" id="CHEBI:58369"/>
        <dbReference type="ChEBI" id="CHEBI:63528"/>
        <dbReference type="ChEBI" id="CHEBI:456216"/>
        <dbReference type="EC" id="2.7.4.9"/>
    </reaction>
</comment>
<comment type="similarity">
    <text evidence="1">Belongs to the thymidylate kinase family.</text>
</comment>
<evidence type="ECO:0000255" key="1">
    <source>
        <dbReference type="HAMAP-Rule" id="MF_00165"/>
    </source>
</evidence>
<gene>
    <name evidence="1" type="primary">tmk</name>
    <name type="ordered locus">SPCG_0909</name>
</gene>
<protein>
    <recommendedName>
        <fullName evidence="1">Thymidylate kinase</fullName>
        <ecNumber evidence="1">2.7.4.9</ecNumber>
    </recommendedName>
    <alternativeName>
        <fullName evidence="1">dTMP kinase</fullName>
    </alternativeName>
</protein>
<accession>B2IP90</accession>
<keyword id="KW-0067">ATP-binding</keyword>
<keyword id="KW-0418">Kinase</keyword>
<keyword id="KW-0545">Nucleotide biosynthesis</keyword>
<keyword id="KW-0547">Nucleotide-binding</keyword>
<keyword id="KW-0808">Transferase</keyword>
<proteinExistence type="inferred from homology"/>